<keyword id="KW-0414">Isoprene biosynthesis</keyword>
<keyword id="KW-0548">Nucleotidyltransferase</keyword>
<keyword id="KW-0808">Transferase</keyword>
<comment type="function">
    <text evidence="1">Catalyzes the formation of 4-diphosphocytidyl-2-C-methyl-D-erythritol from CTP and 2-C-methyl-D-erythritol 4-phosphate (MEP).</text>
</comment>
<comment type="catalytic activity">
    <reaction evidence="1">
        <text>2-C-methyl-D-erythritol 4-phosphate + CTP + H(+) = 4-CDP-2-C-methyl-D-erythritol + diphosphate</text>
        <dbReference type="Rhea" id="RHEA:13429"/>
        <dbReference type="ChEBI" id="CHEBI:15378"/>
        <dbReference type="ChEBI" id="CHEBI:33019"/>
        <dbReference type="ChEBI" id="CHEBI:37563"/>
        <dbReference type="ChEBI" id="CHEBI:57823"/>
        <dbReference type="ChEBI" id="CHEBI:58262"/>
        <dbReference type="EC" id="2.7.7.60"/>
    </reaction>
</comment>
<comment type="pathway">
    <text evidence="1">Isoprenoid biosynthesis; isopentenyl diphosphate biosynthesis via DXP pathway; isopentenyl diphosphate from 1-deoxy-D-xylulose 5-phosphate: step 2/6.</text>
</comment>
<comment type="subunit">
    <text evidence="1">Homodimer.</text>
</comment>
<comment type="similarity">
    <text evidence="1">Belongs to the IspD/TarI cytidylyltransferase family. IspD subfamily.</text>
</comment>
<reference key="1">
    <citation type="journal article" date="2006" name="BMC Genomics">
        <title>Complete genome sequence of Shigella flexneri 5b and comparison with Shigella flexneri 2a.</title>
        <authorList>
            <person name="Nie H."/>
            <person name="Yang F."/>
            <person name="Zhang X."/>
            <person name="Yang J."/>
            <person name="Chen L."/>
            <person name="Wang J."/>
            <person name="Xiong Z."/>
            <person name="Peng J."/>
            <person name="Sun L."/>
            <person name="Dong J."/>
            <person name="Xue Y."/>
            <person name="Xu X."/>
            <person name="Chen S."/>
            <person name="Yao Z."/>
            <person name="Shen Y."/>
            <person name="Jin Q."/>
        </authorList>
    </citation>
    <scope>NUCLEOTIDE SEQUENCE [LARGE SCALE GENOMIC DNA]</scope>
    <source>
        <strain>8401</strain>
    </source>
</reference>
<sequence length="236" mass="25738">MATTHLDVCAVVPAAGFGRRMQTECPKQYLSIGNQTILEHSVHALLAHPRVTRVVIAISPGDSRFAQLPLANHPQITVVDGGDERADSVLAGLKAAGDVQWVLVHDAARPCLHQDDLARLLALSETSRTGGILAAPVRDTMKRAEPGKNAIAHTVDRNGLWHALTPQFFPRELLHDCLTRALNEGATITDEASALEYCGFHPQLVEGRADNIKVTRPEDLALAEFYLTRTIHQENT</sequence>
<accession>Q0T1H8</accession>
<name>ISPD_SHIF8</name>
<dbReference type="EC" id="2.7.7.60" evidence="1"/>
<dbReference type="EMBL" id="CP000266">
    <property type="protein sequence ID" value="ABF04837.1"/>
    <property type="molecule type" value="Genomic_DNA"/>
</dbReference>
<dbReference type="RefSeq" id="WP_000246155.1">
    <property type="nucleotide sequence ID" value="NC_008258.1"/>
</dbReference>
<dbReference type="SMR" id="Q0T1H8"/>
<dbReference type="KEGG" id="sfv:SFV_2751"/>
<dbReference type="HOGENOM" id="CLU_061281_3_1_6"/>
<dbReference type="UniPathway" id="UPA00056">
    <property type="reaction ID" value="UER00093"/>
</dbReference>
<dbReference type="Proteomes" id="UP000000659">
    <property type="component" value="Chromosome"/>
</dbReference>
<dbReference type="GO" id="GO:0050518">
    <property type="term" value="F:2-C-methyl-D-erythritol 4-phosphate cytidylyltransferase activity"/>
    <property type="evidence" value="ECO:0007669"/>
    <property type="project" value="UniProtKB-UniRule"/>
</dbReference>
<dbReference type="GO" id="GO:0019288">
    <property type="term" value="P:isopentenyl diphosphate biosynthetic process, methylerythritol 4-phosphate pathway"/>
    <property type="evidence" value="ECO:0007669"/>
    <property type="project" value="UniProtKB-UniRule"/>
</dbReference>
<dbReference type="CDD" id="cd02516">
    <property type="entry name" value="CDP-ME_synthetase"/>
    <property type="match status" value="1"/>
</dbReference>
<dbReference type="FunFam" id="3.90.550.10:FF:000003">
    <property type="entry name" value="2-C-methyl-D-erythritol 4-phosphate cytidylyltransferase"/>
    <property type="match status" value="1"/>
</dbReference>
<dbReference type="Gene3D" id="3.90.550.10">
    <property type="entry name" value="Spore Coat Polysaccharide Biosynthesis Protein SpsA, Chain A"/>
    <property type="match status" value="1"/>
</dbReference>
<dbReference type="HAMAP" id="MF_00108">
    <property type="entry name" value="IspD"/>
    <property type="match status" value="1"/>
</dbReference>
<dbReference type="InterPro" id="IPR001228">
    <property type="entry name" value="IspD"/>
</dbReference>
<dbReference type="InterPro" id="IPR034683">
    <property type="entry name" value="IspD/TarI"/>
</dbReference>
<dbReference type="InterPro" id="IPR050088">
    <property type="entry name" value="IspD/TarI_cytidylyltransf_bact"/>
</dbReference>
<dbReference type="InterPro" id="IPR018294">
    <property type="entry name" value="ISPD_synthase_CS"/>
</dbReference>
<dbReference type="InterPro" id="IPR029044">
    <property type="entry name" value="Nucleotide-diphossugar_trans"/>
</dbReference>
<dbReference type="NCBIfam" id="TIGR00453">
    <property type="entry name" value="ispD"/>
    <property type="match status" value="1"/>
</dbReference>
<dbReference type="PANTHER" id="PTHR32125">
    <property type="entry name" value="2-C-METHYL-D-ERYTHRITOL 4-PHOSPHATE CYTIDYLYLTRANSFERASE, CHLOROPLASTIC"/>
    <property type="match status" value="1"/>
</dbReference>
<dbReference type="PANTHER" id="PTHR32125:SF4">
    <property type="entry name" value="2-C-METHYL-D-ERYTHRITOL 4-PHOSPHATE CYTIDYLYLTRANSFERASE, CHLOROPLASTIC"/>
    <property type="match status" value="1"/>
</dbReference>
<dbReference type="Pfam" id="PF01128">
    <property type="entry name" value="IspD"/>
    <property type="match status" value="1"/>
</dbReference>
<dbReference type="SUPFAM" id="SSF53448">
    <property type="entry name" value="Nucleotide-diphospho-sugar transferases"/>
    <property type="match status" value="1"/>
</dbReference>
<dbReference type="PROSITE" id="PS01295">
    <property type="entry name" value="ISPD"/>
    <property type="match status" value="1"/>
</dbReference>
<gene>
    <name evidence="1" type="primary">ispD</name>
    <name type="ordered locus">SFV_2751</name>
</gene>
<organism>
    <name type="scientific">Shigella flexneri serotype 5b (strain 8401)</name>
    <dbReference type="NCBI Taxonomy" id="373384"/>
    <lineage>
        <taxon>Bacteria</taxon>
        <taxon>Pseudomonadati</taxon>
        <taxon>Pseudomonadota</taxon>
        <taxon>Gammaproteobacteria</taxon>
        <taxon>Enterobacterales</taxon>
        <taxon>Enterobacteriaceae</taxon>
        <taxon>Shigella</taxon>
    </lineage>
</organism>
<protein>
    <recommendedName>
        <fullName evidence="1">2-C-methyl-D-erythritol 4-phosphate cytidylyltransferase</fullName>
        <ecNumber evidence="1">2.7.7.60</ecNumber>
    </recommendedName>
    <alternativeName>
        <fullName evidence="1">4-diphosphocytidyl-2C-methyl-D-erythritol synthase</fullName>
    </alternativeName>
    <alternativeName>
        <fullName evidence="1">MEP cytidylyltransferase</fullName>
        <shortName evidence="1">MCT</shortName>
    </alternativeName>
</protein>
<proteinExistence type="inferred from homology"/>
<feature type="chain" id="PRO_1000022948" description="2-C-methyl-D-erythritol 4-phosphate cytidylyltransferase">
    <location>
        <begin position="1"/>
        <end position="236"/>
    </location>
</feature>
<feature type="site" description="Transition state stabilizer" evidence="1">
    <location>
        <position position="20"/>
    </location>
</feature>
<feature type="site" description="Transition state stabilizer" evidence="1">
    <location>
        <position position="27"/>
    </location>
</feature>
<feature type="site" description="Positions MEP for the nucleophilic attack" evidence="1">
    <location>
        <position position="157"/>
    </location>
</feature>
<feature type="site" description="Positions MEP for the nucleophilic attack" evidence="1">
    <location>
        <position position="213"/>
    </location>
</feature>
<evidence type="ECO:0000255" key="1">
    <source>
        <dbReference type="HAMAP-Rule" id="MF_00108"/>
    </source>
</evidence>